<keyword id="KW-0067">ATP-binding</keyword>
<keyword id="KW-0963">Cytoplasm</keyword>
<keyword id="KW-0324">Glycolysis</keyword>
<keyword id="KW-0418">Kinase</keyword>
<keyword id="KW-0547">Nucleotide-binding</keyword>
<keyword id="KW-1185">Reference proteome</keyword>
<keyword id="KW-0808">Transferase</keyword>
<dbReference type="EC" id="2.7.2.3"/>
<dbReference type="EMBL" id="AE004439">
    <property type="protein sequence ID" value="AAK03944.1"/>
    <property type="molecule type" value="Genomic_DNA"/>
</dbReference>
<dbReference type="RefSeq" id="WP_005758072.1">
    <property type="nucleotide sequence ID" value="NC_002663.1"/>
</dbReference>
<dbReference type="SMR" id="P57973"/>
<dbReference type="STRING" id="272843.PM1860"/>
<dbReference type="EnsemblBacteria" id="AAK03944">
    <property type="protein sequence ID" value="AAK03944"/>
    <property type="gene ID" value="PM1860"/>
</dbReference>
<dbReference type="GeneID" id="77207205"/>
<dbReference type="KEGG" id="pmu:PM1860"/>
<dbReference type="HOGENOM" id="CLU_025427_0_2_6"/>
<dbReference type="OrthoDB" id="9808460at2"/>
<dbReference type="UniPathway" id="UPA00109">
    <property type="reaction ID" value="UER00185"/>
</dbReference>
<dbReference type="Proteomes" id="UP000000809">
    <property type="component" value="Chromosome"/>
</dbReference>
<dbReference type="GO" id="GO:0005829">
    <property type="term" value="C:cytosol"/>
    <property type="evidence" value="ECO:0007669"/>
    <property type="project" value="TreeGrafter"/>
</dbReference>
<dbReference type="GO" id="GO:0043531">
    <property type="term" value="F:ADP binding"/>
    <property type="evidence" value="ECO:0007669"/>
    <property type="project" value="TreeGrafter"/>
</dbReference>
<dbReference type="GO" id="GO:0005524">
    <property type="term" value="F:ATP binding"/>
    <property type="evidence" value="ECO:0007669"/>
    <property type="project" value="UniProtKB-KW"/>
</dbReference>
<dbReference type="GO" id="GO:0004618">
    <property type="term" value="F:phosphoglycerate kinase activity"/>
    <property type="evidence" value="ECO:0007669"/>
    <property type="project" value="UniProtKB-UniRule"/>
</dbReference>
<dbReference type="GO" id="GO:0006094">
    <property type="term" value="P:gluconeogenesis"/>
    <property type="evidence" value="ECO:0007669"/>
    <property type="project" value="TreeGrafter"/>
</dbReference>
<dbReference type="GO" id="GO:0006096">
    <property type="term" value="P:glycolytic process"/>
    <property type="evidence" value="ECO:0007669"/>
    <property type="project" value="UniProtKB-UniRule"/>
</dbReference>
<dbReference type="FunFam" id="3.40.50.1260:FF:000001">
    <property type="entry name" value="Phosphoglycerate kinase"/>
    <property type="match status" value="1"/>
</dbReference>
<dbReference type="FunFam" id="3.40.50.1260:FF:000002">
    <property type="entry name" value="Phosphoglycerate kinase"/>
    <property type="match status" value="1"/>
</dbReference>
<dbReference type="Gene3D" id="3.40.50.1260">
    <property type="entry name" value="Phosphoglycerate kinase, N-terminal domain"/>
    <property type="match status" value="2"/>
</dbReference>
<dbReference type="HAMAP" id="MF_00145">
    <property type="entry name" value="Phosphoglyc_kinase"/>
    <property type="match status" value="1"/>
</dbReference>
<dbReference type="InterPro" id="IPR001576">
    <property type="entry name" value="Phosphoglycerate_kinase"/>
</dbReference>
<dbReference type="InterPro" id="IPR015911">
    <property type="entry name" value="Phosphoglycerate_kinase_CS"/>
</dbReference>
<dbReference type="InterPro" id="IPR015824">
    <property type="entry name" value="Phosphoglycerate_kinase_N"/>
</dbReference>
<dbReference type="InterPro" id="IPR036043">
    <property type="entry name" value="Phosphoglycerate_kinase_sf"/>
</dbReference>
<dbReference type="PANTHER" id="PTHR11406">
    <property type="entry name" value="PHOSPHOGLYCERATE KINASE"/>
    <property type="match status" value="1"/>
</dbReference>
<dbReference type="PANTHER" id="PTHR11406:SF23">
    <property type="entry name" value="PHOSPHOGLYCERATE KINASE 1, CHLOROPLASTIC-RELATED"/>
    <property type="match status" value="1"/>
</dbReference>
<dbReference type="Pfam" id="PF00162">
    <property type="entry name" value="PGK"/>
    <property type="match status" value="1"/>
</dbReference>
<dbReference type="PIRSF" id="PIRSF000724">
    <property type="entry name" value="Pgk"/>
    <property type="match status" value="1"/>
</dbReference>
<dbReference type="PRINTS" id="PR00477">
    <property type="entry name" value="PHGLYCKINASE"/>
</dbReference>
<dbReference type="SUPFAM" id="SSF53748">
    <property type="entry name" value="Phosphoglycerate kinase"/>
    <property type="match status" value="1"/>
</dbReference>
<dbReference type="PROSITE" id="PS00111">
    <property type="entry name" value="PGLYCERATE_KINASE"/>
    <property type="match status" value="1"/>
</dbReference>
<reference key="1">
    <citation type="journal article" date="2001" name="Proc. Natl. Acad. Sci. U.S.A.">
        <title>Complete genomic sequence of Pasteurella multocida Pm70.</title>
        <authorList>
            <person name="May B.J."/>
            <person name="Zhang Q."/>
            <person name="Li L.L."/>
            <person name="Paustian M.L."/>
            <person name="Whittam T.S."/>
            <person name="Kapur V."/>
        </authorList>
    </citation>
    <scope>NUCLEOTIDE SEQUENCE [LARGE SCALE GENOMIC DNA]</scope>
    <source>
        <strain>Pm70</strain>
    </source>
</reference>
<comment type="catalytic activity">
    <reaction>
        <text>(2R)-3-phosphoglycerate + ATP = (2R)-3-phospho-glyceroyl phosphate + ADP</text>
        <dbReference type="Rhea" id="RHEA:14801"/>
        <dbReference type="ChEBI" id="CHEBI:30616"/>
        <dbReference type="ChEBI" id="CHEBI:57604"/>
        <dbReference type="ChEBI" id="CHEBI:58272"/>
        <dbReference type="ChEBI" id="CHEBI:456216"/>
        <dbReference type="EC" id="2.7.2.3"/>
    </reaction>
</comment>
<comment type="pathway">
    <text>Carbohydrate degradation; glycolysis; pyruvate from D-glyceraldehyde 3-phosphate: step 2/5.</text>
</comment>
<comment type="subunit">
    <text evidence="1">Monomer.</text>
</comment>
<comment type="subcellular location">
    <subcellularLocation>
        <location evidence="2">Cytoplasm</location>
    </subcellularLocation>
</comment>
<comment type="similarity">
    <text evidence="2">Belongs to the phosphoglycerate kinase family.</text>
</comment>
<evidence type="ECO:0000250" key="1"/>
<evidence type="ECO:0000305" key="2"/>
<protein>
    <recommendedName>
        <fullName>Phosphoglycerate kinase</fullName>
        <ecNumber>2.7.2.3</ecNumber>
    </recommendedName>
</protein>
<proteinExistence type="inferred from homology"/>
<sequence>MSVIKMTDLDLSGKRVFIRADLNVPVKDGKVTSDARIRATIPTLKLALEKGAKVMVTSHLGRPTEGEFDEANSLKPVVDYLNANLDVPVRLVRDYLDGVDVNQGEIVVLENVRINKGEKKNDPELGKKYAALCDVFVMDAFGTAHRAQASTYGVAEYAPVACAGPLLAAELDALGKALKEPARPMVAIVGGSKVSTKLEVLNSLSKIADQIIVGGGIANTFIAAAGHNVGKSLYEEDLIPVAKNLAASTDIPVPVDVRVGLEFSETAAATEKAVNEVKDDESIFDIGDKSAEQLAEIIKNAKTILWNGPVGVFEFPNFRKGTEIISHAIANSEGFSIAGGGDTLAAIDLFGIKDKISYISTGGGAFLEFVEGKVLPAVEILEKRANG</sequence>
<organism>
    <name type="scientific">Pasteurella multocida (strain Pm70)</name>
    <dbReference type="NCBI Taxonomy" id="272843"/>
    <lineage>
        <taxon>Bacteria</taxon>
        <taxon>Pseudomonadati</taxon>
        <taxon>Pseudomonadota</taxon>
        <taxon>Gammaproteobacteria</taxon>
        <taxon>Pasteurellales</taxon>
        <taxon>Pasteurellaceae</taxon>
        <taxon>Pasteurella</taxon>
    </lineage>
</organism>
<accession>P57973</accession>
<gene>
    <name type="primary">pgk</name>
    <name type="ordered locus">PM1860</name>
</gene>
<name>PGK_PASMU</name>
<feature type="chain" id="PRO_0000145980" description="Phosphoglycerate kinase">
    <location>
        <begin position="1"/>
        <end position="387"/>
    </location>
</feature>
<feature type="binding site" evidence="1">
    <location>
        <begin position="21"/>
        <end position="23"/>
    </location>
    <ligand>
        <name>substrate</name>
    </ligand>
</feature>
<feature type="binding site" evidence="1">
    <location>
        <position position="36"/>
    </location>
    <ligand>
        <name>substrate</name>
    </ligand>
</feature>
<feature type="binding site" evidence="1">
    <location>
        <begin position="59"/>
        <end position="62"/>
    </location>
    <ligand>
        <name>substrate</name>
    </ligand>
</feature>
<feature type="binding site" evidence="1">
    <location>
        <position position="113"/>
    </location>
    <ligand>
        <name>substrate</name>
    </ligand>
</feature>
<feature type="binding site" evidence="1">
    <location>
        <position position="146"/>
    </location>
    <ligand>
        <name>substrate</name>
    </ligand>
</feature>
<feature type="binding site" evidence="1">
    <location>
        <position position="197"/>
    </location>
    <ligand>
        <name>ATP</name>
        <dbReference type="ChEBI" id="CHEBI:30616"/>
    </ligand>
</feature>
<feature type="binding site" evidence="1">
    <location>
        <position position="314"/>
    </location>
    <ligand>
        <name>ATP</name>
        <dbReference type="ChEBI" id="CHEBI:30616"/>
    </ligand>
</feature>
<feature type="binding site" evidence="1">
    <location>
        <begin position="340"/>
        <end position="343"/>
    </location>
    <ligand>
        <name>ATP</name>
        <dbReference type="ChEBI" id="CHEBI:30616"/>
    </ligand>
</feature>